<protein>
    <recommendedName>
        <fullName evidence="1">Peptide deformylase</fullName>
        <shortName evidence="1">PDF</shortName>
        <ecNumber evidence="1">3.5.1.88</ecNumber>
    </recommendedName>
    <alternativeName>
        <fullName evidence="1">Polypeptide deformylase</fullName>
    </alternativeName>
</protein>
<sequence>MYLMKDITRDGAKVLRETAKPVTFPLSDEDKQLAHDMMAYLVISQDEEQNEKYHLRPGVGLAAPQVGQSKAMAAVLVPGDDNEILFKEVLINPRIISNSVQHAALAEGEGCLSVDKDVPGYVVRADRITISYQNEAGEHKKIRLKNYPAIVCQHEIDHLNGVLFYDHINKEHPFTIDPDAVIIK</sequence>
<accession>Q039N7</accession>
<name>DEF_LACP3</name>
<proteinExistence type="inferred from homology"/>
<feature type="chain" id="PRO_0000301043" description="Peptide deformylase">
    <location>
        <begin position="1"/>
        <end position="184"/>
    </location>
</feature>
<feature type="active site" evidence="1">
    <location>
        <position position="155"/>
    </location>
</feature>
<feature type="binding site" evidence="1">
    <location>
        <position position="111"/>
    </location>
    <ligand>
        <name>Fe cation</name>
        <dbReference type="ChEBI" id="CHEBI:24875"/>
    </ligand>
</feature>
<feature type="binding site" evidence="1">
    <location>
        <position position="154"/>
    </location>
    <ligand>
        <name>Fe cation</name>
        <dbReference type="ChEBI" id="CHEBI:24875"/>
    </ligand>
</feature>
<feature type="binding site" evidence="1">
    <location>
        <position position="158"/>
    </location>
    <ligand>
        <name>Fe cation</name>
        <dbReference type="ChEBI" id="CHEBI:24875"/>
    </ligand>
</feature>
<evidence type="ECO:0000255" key="1">
    <source>
        <dbReference type="HAMAP-Rule" id="MF_00163"/>
    </source>
</evidence>
<keyword id="KW-0378">Hydrolase</keyword>
<keyword id="KW-0408">Iron</keyword>
<keyword id="KW-0479">Metal-binding</keyword>
<keyword id="KW-0648">Protein biosynthesis</keyword>
<keyword id="KW-1185">Reference proteome</keyword>
<organism>
    <name type="scientific">Lacticaseibacillus paracasei (strain ATCC 334 / BCRC 17002 / CCUG 31169 / CIP 107868 / KCTC 3260 / NRRL B-441)</name>
    <name type="common">Lactobacillus paracasei</name>
    <dbReference type="NCBI Taxonomy" id="321967"/>
    <lineage>
        <taxon>Bacteria</taxon>
        <taxon>Bacillati</taxon>
        <taxon>Bacillota</taxon>
        <taxon>Bacilli</taxon>
        <taxon>Lactobacillales</taxon>
        <taxon>Lactobacillaceae</taxon>
        <taxon>Lacticaseibacillus</taxon>
    </lineage>
</organism>
<gene>
    <name evidence="1" type="primary">def</name>
    <name type="ordered locus">LSEI_1303</name>
</gene>
<comment type="function">
    <text evidence="1">Removes the formyl group from the N-terminal Met of newly synthesized proteins. Requires at least a dipeptide for an efficient rate of reaction. N-terminal L-methionine is a prerequisite for activity but the enzyme has broad specificity at other positions.</text>
</comment>
<comment type="catalytic activity">
    <reaction evidence="1">
        <text>N-terminal N-formyl-L-methionyl-[peptide] + H2O = N-terminal L-methionyl-[peptide] + formate</text>
        <dbReference type="Rhea" id="RHEA:24420"/>
        <dbReference type="Rhea" id="RHEA-COMP:10639"/>
        <dbReference type="Rhea" id="RHEA-COMP:10640"/>
        <dbReference type="ChEBI" id="CHEBI:15377"/>
        <dbReference type="ChEBI" id="CHEBI:15740"/>
        <dbReference type="ChEBI" id="CHEBI:49298"/>
        <dbReference type="ChEBI" id="CHEBI:64731"/>
        <dbReference type="EC" id="3.5.1.88"/>
    </reaction>
</comment>
<comment type="cofactor">
    <cofactor evidence="1">
        <name>Fe(2+)</name>
        <dbReference type="ChEBI" id="CHEBI:29033"/>
    </cofactor>
    <text evidence="1">Binds 1 Fe(2+) ion.</text>
</comment>
<comment type="similarity">
    <text evidence="1">Belongs to the polypeptide deformylase family.</text>
</comment>
<dbReference type="EC" id="3.5.1.88" evidence="1"/>
<dbReference type="EMBL" id="CP000423">
    <property type="protein sequence ID" value="ABJ70085.1"/>
    <property type="molecule type" value="Genomic_DNA"/>
</dbReference>
<dbReference type="RefSeq" id="WP_003565220.1">
    <property type="nucleotide sequence ID" value="NC_008526.1"/>
</dbReference>
<dbReference type="RefSeq" id="YP_806527.1">
    <property type="nucleotide sequence ID" value="NC_008526.1"/>
</dbReference>
<dbReference type="SMR" id="Q039N7"/>
<dbReference type="STRING" id="321967.LSEI_1303"/>
<dbReference type="PaxDb" id="321967-LSEI_1303"/>
<dbReference type="GeneID" id="57089980"/>
<dbReference type="KEGG" id="lca:LSEI_1303"/>
<dbReference type="PATRIC" id="fig|321967.11.peg.1282"/>
<dbReference type="HOGENOM" id="CLU_061901_4_0_9"/>
<dbReference type="Proteomes" id="UP000001651">
    <property type="component" value="Chromosome"/>
</dbReference>
<dbReference type="GO" id="GO:0046872">
    <property type="term" value="F:metal ion binding"/>
    <property type="evidence" value="ECO:0007669"/>
    <property type="project" value="UniProtKB-KW"/>
</dbReference>
<dbReference type="GO" id="GO:0042586">
    <property type="term" value="F:peptide deformylase activity"/>
    <property type="evidence" value="ECO:0007669"/>
    <property type="project" value="UniProtKB-UniRule"/>
</dbReference>
<dbReference type="GO" id="GO:0043686">
    <property type="term" value="P:co-translational protein modification"/>
    <property type="evidence" value="ECO:0007669"/>
    <property type="project" value="TreeGrafter"/>
</dbReference>
<dbReference type="GO" id="GO:0006412">
    <property type="term" value="P:translation"/>
    <property type="evidence" value="ECO:0007669"/>
    <property type="project" value="UniProtKB-UniRule"/>
</dbReference>
<dbReference type="CDD" id="cd00487">
    <property type="entry name" value="Pep_deformylase"/>
    <property type="match status" value="1"/>
</dbReference>
<dbReference type="FunFam" id="3.90.45.10:FF:000002">
    <property type="entry name" value="Peptide deformylase"/>
    <property type="match status" value="1"/>
</dbReference>
<dbReference type="Gene3D" id="3.90.45.10">
    <property type="entry name" value="Peptide deformylase"/>
    <property type="match status" value="1"/>
</dbReference>
<dbReference type="HAMAP" id="MF_00163">
    <property type="entry name" value="Pep_deformylase"/>
    <property type="match status" value="1"/>
</dbReference>
<dbReference type="InterPro" id="IPR023635">
    <property type="entry name" value="Peptide_deformylase"/>
</dbReference>
<dbReference type="InterPro" id="IPR036821">
    <property type="entry name" value="Peptide_deformylase_sf"/>
</dbReference>
<dbReference type="NCBIfam" id="TIGR00079">
    <property type="entry name" value="pept_deformyl"/>
    <property type="match status" value="1"/>
</dbReference>
<dbReference type="PANTHER" id="PTHR10458">
    <property type="entry name" value="PEPTIDE DEFORMYLASE"/>
    <property type="match status" value="1"/>
</dbReference>
<dbReference type="PANTHER" id="PTHR10458:SF8">
    <property type="entry name" value="PEPTIDE DEFORMYLASE 2"/>
    <property type="match status" value="1"/>
</dbReference>
<dbReference type="Pfam" id="PF01327">
    <property type="entry name" value="Pep_deformylase"/>
    <property type="match status" value="1"/>
</dbReference>
<dbReference type="PIRSF" id="PIRSF004749">
    <property type="entry name" value="Pep_def"/>
    <property type="match status" value="1"/>
</dbReference>
<dbReference type="PRINTS" id="PR01576">
    <property type="entry name" value="PDEFORMYLASE"/>
</dbReference>
<dbReference type="SUPFAM" id="SSF56420">
    <property type="entry name" value="Peptide deformylase"/>
    <property type="match status" value="1"/>
</dbReference>
<reference key="1">
    <citation type="journal article" date="2006" name="Proc. Natl. Acad. Sci. U.S.A.">
        <title>Comparative genomics of the lactic acid bacteria.</title>
        <authorList>
            <person name="Makarova K.S."/>
            <person name="Slesarev A."/>
            <person name="Wolf Y.I."/>
            <person name="Sorokin A."/>
            <person name="Mirkin B."/>
            <person name="Koonin E.V."/>
            <person name="Pavlov A."/>
            <person name="Pavlova N."/>
            <person name="Karamychev V."/>
            <person name="Polouchine N."/>
            <person name="Shakhova V."/>
            <person name="Grigoriev I."/>
            <person name="Lou Y."/>
            <person name="Rohksar D."/>
            <person name="Lucas S."/>
            <person name="Huang K."/>
            <person name="Goodstein D.M."/>
            <person name="Hawkins T."/>
            <person name="Plengvidhya V."/>
            <person name="Welker D."/>
            <person name="Hughes J."/>
            <person name="Goh Y."/>
            <person name="Benson A."/>
            <person name="Baldwin K."/>
            <person name="Lee J.-H."/>
            <person name="Diaz-Muniz I."/>
            <person name="Dosti B."/>
            <person name="Smeianov V."/>
            <person name="Wechter W."/>
            <person name="Barabote R."/>
            <person name="Lorca G."/>
            <person name="Altermann E."/>
            <person name="Barrangou R."/>
            <person name="Ganesan B."/>
            <person name="Xie Y."/>
            <person name="Rawsthorne H."/>
            <person name="Tamir D."/>
            <person name="Parker C."/>
            <person name="Breidt F."/>
            <person name="Broadbent J.R."/>
            <person name="Hutkins R."/>
            <person name="O'Sullivan D."/>
            <person name="Steele J."/>
            <person name="Unlu G."/>
            <person name="Saier M.H. Jr."/>
            <person name="Klaenhammer T."/>
            <person name="Richardson P."/>
            <person name="Kozyavkin S."/>
            <person name="Weimer B.C."/>
            <person name="Mills D.A."/>
        </authorList>
    </citation>
    <scope>NUCLEOTIDE SEQUENCE [LARGE SCALE GENOMIC DNA]</scope>
    <source>
        <strain>ATCC 334 / BCRC 17002 / CCUG 31169 / CIP 107868 / KCTC 3260 / NRRL B-441</strain>
    </source>
</reference>